<feature type="chain" id="PRO_1000190409" description="ADP-L-glycero-D-manno-heptose-6-epimerase">
    <location>
        <begin position="1"/>
        <end position="310"/>
    </location>
</feature>
<feature type="active site" description="Proton acceptor" evidence="1">
    <location>
        <position position="140"/>
    </location>
</feature>
<feature type="active site" description="Proton acceptor" evidence="1">
    <location>
        <position position="178"/>
    </location>
</feature>
<feature type="binding site" evidence="1">
    <location>
        <begin position="10"/>
        <end position="11"/>
    </location>
    <ligand>
        <name>NADP(+)</name>
        <dbReference type="ChEBI" id="CHEBI:58349"/>
    </ligand>
</feature>
<feature type="binding site" evidence="1">
    <location>
        <begin position="31"/>
        <end position="32"/>
    </location>
    <ligand>
        <name>NADP(+)</name>
        <dbReference type="ChEBI" id="CHEBI:58349"/>
    </ligand>
</feature>
<feature type="binding site" evidence="1">
    <location>
        <position position="38"/>
    </location>
    <ligand>
        <name>NADP(+)</name>
        <dbReference type="ChEBI" id="CHEBI:58349"/>
    </ligand>
</feature>
<feature type="binding site" evidence="1">
    <location>
        <position position="53"/>
    </location>
    <ligand>
        <name>NADP(+)</name>
        <dbReference type="ChEBI" id="CHEBI:58349"/>
    </ligand>
</feature>
<feature type="binding site" evidence="1">
    <location>
        <begin position="75"/>
        <end position="79"/>
    </location>
    <ligand>
        <name>NADP(+)</name>
        <dbReference type="ChEBI" id="CHEBI:58349"/>
    </ligand>
</feature>
<feature type="binding site" evidence="1">
    <location>
        <position position="92"/>
    </location>
    <ligand>
        <name>NADP(+)</name>
        <dbReference type="ChEBI" id="CHEBI:58349"/>
    </ligand>
</feature>
<feature type="binding site" evidence="1">
    <location>
        <position position="144"/>
    </location>
    <ligand>
        <name>NADP(+)</name>
        <dbReference type="ChEBI" id="CHEBI:58349"/>
    </ligand>
</feature>
<feature type="binding site" evidence="1">
    <location>
        <position position="169"/>
    </location>
    <ligand>
        <name>substrate</name>
    </ligand>
</feature>
<feature type="binding site" evidence="1">
    <location>
        <position position="170"/>
    </location>
    <ligand>
        <name>NADP(+)</name>
        <dbReference type="ChEBI" id="CHEBI:58349"/>
    </ligand>
</feature>
<feature type="binding site" evidence="1">
    <location>
        <position position="178"/>
    </location>
    <ligand>
        <name>NADP(+)</name>
        <dbReference type="ChEBI" id="CHEBI:58349"/>
    </ligand>
</feature>
<feature type="binding site" evidence="1">
    <location>
        <position position="180"/>
    </location>
    <ligand>
        <name>substrate</name>
    </ligand>
</feature>
<feature type="binding site" evidence="1">
    <location>
        <position position="187"/>
    </location>
    <ligand>
        <name>substrate</name>
    </ligand>
</feature>
<feature type="binding site" evidence="1">
    <location>
        <begin position="201"/>
        <end position="204"/>
    </location>
    <ligand>
        <name>substrate</name>
    </ligand>
</feature>
<feature type="binding site" evidence="1">
    <location>
        <position position="209"/>
    </location>
    <ligand>
        <name>substrate</name>
    </ligand>
</feature>
<feature type="binding site" evidence="1">
    <location>
        <position position="272"/>
    </location>
    <ligand>
        <name>substrate</name>
    </ligand>
</feature>
<name>HLDD_SALDC</name>
<evidence type="ECO:0000255" key="1">
    <source>
        <dbReference type="HAMAP-Rule" id="MF_01601"/>
    </source>
</evidence>
<gene>
    <name evidence="1" type="primary">hldD</name>
    <name type="ordered locus">SeD_A4096</name>
</gene>
<protein>
    <recommendedName>
        <fullName evidence="1">ADP-L-glycero-D-manno-heptose-6-epimerase</fullName>
        <ecNumber evidence="1">5.1.3.20</ecNumber>
    </recommendedName>
    <alternativeName>
        <fullName evidence="1">ADP-L-glycero-beta-D-manno-heptose-6-epimerase</fullName>
        <shortName evidence="1">ADP-glyceromanno-heptose 6-epimerase</shortName>
        <shortName evidence="1">ADP-hep 6-epimerase</shortName>
        <shortName evidence="1">AGME</shortName>
    </alternativeName>
</protein>
<sequence length="310" mass="34879">MIIVTGGAGFIGSNIVKALNDKGITDILVVDNLKDGTKFVNLVDLNIADYMDKEDFLIQIMSGEELGDIEAIFHEGACSSTTEWDGKYMMDNNYQYSKELLHYCLEREIPFLYASSAATYGGRTSDFIESREYEKPLNVYGYSKFLFDEYVRQILPEANSQIVGFRYFNVYGPREGHKGSMASVAFHLNTQLNNGESPKLFEGSENFKRDFVYVGDVAAVNLWFLESGKSGIFNLGTGRAESFQAVADATLAYHKKSSIEYIPFPDKLKGRYQAFTQADLTNLRNAGYDKPFKTVAEGVTEYMAWLNRDA</sequence>
<reference key="1">
    <citation type="journal article" date="2011" name="J. Bacteriol.">
        <title>Comparative genomics of 28 Salmonella enterica isolates: evidence for CRISPR-mediated adaptive sublineage evolution.</title>
        <authorList>
            <person name="Fricke W.F."/>
            <person name="Mammel M.K."/>
            <person name="McDermott P.F."/>
            <person name="Tartera C."/>
            <person name="White D.G."/>
            <person name="Leclerc J.E."/>
            <person name="Ravel J."/>
            <person name="Cebula T.A."/>
        </authorList>
    </citation>
    <scope>NUCLEOTIDE SEQUENCE [LARGE SCALE GENOMIC DNA]</scope>
    <source>
        <strain>CT_02021853</strain>
    </source>
</reference>
<organism>
    <name type="scientific">Salmonella dublin (strain CT_02021853)</name>
    <dbReference type="NCBI Taxonomy" id="439851"/>
    <lineage>
        <taxon>Bacteria</taxon>
        <taxon>Pseudomonadati</taxon>
        <taxon>Pseudomonadota</taxon>
        <taxon>Gammaproteobacteria</taxon>
        <taxon>Enterobacterales</taxon>
        <taxon>Enterobacteriaceae</taxon>
        <taxon>Salmonella</taxon>
    </lineage>
</organism>
<comment type="function">
    <text evidence="1">Catalyzes the interconversion between ADP-D-glycero-beta-D-manno-heptose and ADP-L-glycero-beta-D-manno-heptose via an epimerization at carbon 6 of the heptose.</text>
</comment>
<comment type="catalytic activity">
    <reaction evidence="1">
        <text>ADP-D-glycero-beta-D-manno-heptose = ADP-L-glycero-beta-D-manno-heptose</text>
        <dbReference type="Rhea" id="RHEA:17577"/>
        <dbReference type="ChEBI" id="CHEBI:59967"/>
        <dbReference type="ChEBI" id="CHEBI:61506"/>
        <dbReference type="EC" id="5.1.3.20"/>
    </reaction>
</comment>
<comment type="cofactor">
    <cofactor evidence="1">
        <name>NADP(+)</name>
        <dbReference type="ChEBI" id="CHEBI:58349"/>
    </cofactor>
    <text evidence="1">Binds 1 NADP(+) per subunit.</text>
</comment>
<comment type="pathway">
    <text evidence="1">Nucleotide-sugar biosynthesis; ADP-L-glycero-beta-D-manno-heptose biosynthesis; ADP-L-glycero-beta-D-manno-heptose from D-glycero-beta-D-manno-heptose 7-phosphate: step 4/4.</text>
</comment>
<comment type="subunit">
    <text evidence="1">Homopentamer.</text>
</comment>
<comment type="domain">
    <text evidence="1">Contains a large N-terminal NADP-binding domain, and a smaller C-terminal substrate-binding domain.</text>
</comment>
<comment type="similarity">
    <text evidence="1">Belongs to the NAD(P)-dependent epimerase/dehydratase family. HldD subfamily.</text>
</comment>
<dbReference type="EC" id="5.1.3.20" evidence="1"/>
<dbReference type="EMBL" id="CP001144">
    <property type="protein sequence ID" value="ACH74030.1"/>
    <property type="molecule type" value="Genomic_DNA"/>
</dbReference>
<dbReference type="SMR" id="B5FLI8"/>
<dbReference type="KEGG" id="sed:SeD_A4096"/>
<dbReference type="HOGENOM" id="CLU_007383_1_3_6"/>
<dbReference type="UniPathway" id="UPA00356">
    <property type="reaction ID" value="UER00440"/>
</dbReference>
<dbReference type="Proteomes" id="UP000008322">
    <property type="component" value="Chromosome"/>
</dbReference>
<dbReference type="GO" id="GO:0008712">
    <property type="term" value="F:ADP-glyceromanno-heptose 6-epimerase activity"/>
    <property type="evidence" value="ECO:0007669"/>
    <property type="project" value="UniProtKB-UniRule"/>
</dbReference>
<dbReference type="GO" id="GO:0050661">
    <property type="term" value="F:NADP binding"/>
    <property type="evidence" value="ECO:0007669"/>
    <property type="project" value="InterPro"/>
</dbReference>
<dbReference type="GO" id="GO:0097171">
    <property type="term" value="P:ADP-L-glycero-beta-D-manno-heptose biosynthetic process"/>
    <property type="evidence" value="ECO:0007669"/>
    <property type="project" value="UniProtKB-UniPathway"/>
</dbReference>
<dbReference type="GO" id="GO:0005975">
    <property type="term" value="P:carbohydrate metabolic process"/>
    <property type="evidence" value="ECO:0007669"/>
    <property type="project" value="UniProtKB-UniRule"/>
</dbReference>
<dbReference type="CDD" id="cd05248">
    <property type="entry name" value="ADP_GME_SDR_e"/>
    <property type="match status" value="1"/>
</dbReference>
<dbReference type="Gene3D" id="3.40.50.720">
    <property type="entry name" value="NAD(P)-binding Rossmann-like Domain"/>
    <property type="match status" value="1"/>
</dbReference>
<dbReference type="Gene3D" id="3.90.25.10">
    <property type="entry name" value="UDP-galactose 4-epimerase, domain 1"/>
    <property type="match status" value="1"/>
</dbReference>
<dbReference type="HAMAP" id="MF_01601">
    <property type="entry name" value="Heptose_epimerase"/>
    <property type="match status" value="1"/>
</dbReference>
<dbReference type="InterPro" id="IPR001509">
    <property type="entry name" value="Epimerase_deHydtase"/>
</dbReference>
<dbReference type="InterPro" id="IPR011912">
    <property type="entry name" value="Heptose_epim"/>
</dbReference>
<dbReference type="InterPro" id="IPR036291">
    <property type="entry name" value="NAD(P)-bd_dom_sf"/>
</dbReference>
<dbReference type="NCBIfam" id="TIGR02197">
    <property type="entry name" value="heptose_epim"/>
    <property type="match status" value="1"/>
</dbReference>
<dbReference type="NCBIfam" id="NF008360">
    <property type="entry name" value="PRK11150.1"/>
    <property type="match status" value="1"/>
</dbReference>
<dbReference type="PANTHER" id="PTHR43103:SF3">
    <property type="entry name" value="ADP-L-GLYCERO-D-MANNO-HEPTOSE-6-EPIMERASE"/>
    <property type="match status" value="1"/>
</dbReference>
<dbReference type="PANTHER" id="PTHR43103">
    <property type="entry name" value="NUCLEOSIDE-DIPHOSPHATE-SUGAR EPIMERASE"/>
    <property type="match status" value="1"/>
</dbReference>
<dbReference type="Pfam" id="PF01370">
    <property type="entry name" value="Epimerase"/>
    <property type="match status" value="1"/>
</dbReference>
<dbReference type="SUPFAM" id="SSF51735">
    <property type="entry name" value="NAD(P)-binding Rossmann-fold domains"/>
    <property type="match status" value="1"/>
</dbReference>
<proteinExistence type="inferred from homology"/>
<accession>B5FLI8</accession>
<keyword id="KW-0119">Carbohydrate metabolism</keyword>
<keyword id="KW-0413">Isomerase</keyword>
<keyword id="KW-0521">NADP</keyword>